<dbReference type="EMBL" id="AB016876">
    <property type="protein sequence ID" value="BAB11382.1"/>
    <property type="molecule type" value="Genomic_DNA"/>
</dbReference>
<dbReference type="EMBL" id="CP002688">
    <property type="protein sequence ID" value="AED94472.1"/>
    <property type="molecule type" value="Genomic_DNA"/>
</dbReference>
<dbReference type="EMBL" id="AY091034">
    <property type="protein sequence ID" value="AAM13855.1"/>
    <property type="molecule type" value="mRNA"/>
</dbReference>
<dbReference type="EMBL" id="AY117347">
    <property type="protein sequence ID" value="AAM51422.1"/>
    <property type="molecule type" value="mRNA"/>
</dbReference>
<dbReference type="EMBL" id="AK227191">
    <property type="protein sequence ID" value="BAE99230.1"/>
    <property type="molecule type" value="mRNA"/>
</dbReference>
<dbReference type="EMBL" id="AY086395">
    <property type="protein sequence ID" value="AAM64462.1"/>
    <property type="status" value="ALT_INIT"/>
    <property type="molecule type" value="mRNA"/>
</dbReference>
<dbReference type="RefSeq" id="NP_568570.1">
    <property type="nucleotide sequence ID" value="NM_123338.3"/>
</dbReference>
<dbReference type="SMR" id="Q9FIW9"/>
<dbReference type="BioGRID" id="19223">
    <property type="interactions" value="30"/>
</dbReference>
<dbReference type="FunCoup" id="Q9FIW9">
    <property type="interactions" value="26"/>
</dbReference>
<dbReference type="IntAct" id="Q9FIW9">
    <property type="interactions" value="36"/>
</dbReference>
<dbReference type="STRING" id="3702.Q9FIW9"/>
<dbReference type="GlyGen" id="Q9FIW9">
    <property type="glycosylation" value="1 site, 1 O-linked glycan (1 site)"/>
</dbReference>
<dbReference type="PaxDb" id="3702-AT5G39760.1"/>
<dbReference type="ProteomicsDB" id="232335"/>
<dbReference type="EnsemblPlants" id="AT5G39760.1">
    <property type="protein sequence ID" value="AT5G39760.1"/>
    <property type="gene ID" value="AT5G39760"/>
</dbReference>
<dbReference type="GeneID" id="833972"/>
<dbReference type="Gramene" id="AT5G39760.1">
    <property type="protein sequence ID" value="AT5G39760.1"/>
    <property type="gene ID" value="AT5G39760"/>
</dbReference>
<dbReference type="KEGG" id="ath:AT5G39760"/>
<dbReference type="Araport" id="AT5G39760"/>
<dbReference type="TAIR" id="AT5G39760">
    <property type="gene designation" value="HB23"/>
</dbReference>
<dbReference type="eggNOG" id="ENOG502QWG3">
    <property type="taxonomic scope" value="Eukaryota"/>
</dbReference>
<dbReference type="HOGENOM" id="CLU_039237_0_0_1"/>
<dbReference type="InParanoid" id="Q9FIW9"/>
<dbReference type="OMA" id="LKRHHAN"/>
<dbReference type="OrthoDB" id="1929626at2759"/>
<dbReference type="PhylomeDB" id="Q9FIW9"/>
<dbReference type="PRO" id="PR:Q9FIW9"/>
<dbReference type="Proteomes" id="UP000006548">
    <property type="component" value="Chromosome 5"/>
</dbReference>
<dbReference type="ExpressionAtlas" id="Q9FIW9">
    <property type="expression patterns" value="baseline and differential"/>
</dbReference>
<dbReference type="GO" id="GO:0005634">
    <property type="term" value="C:nucleus"/>
    <property type="evidence" value="ECO:0000314"/>
    <property type="project" value="TAIR"/>
</dbReference>
<dbReference type="GO" id="GO:0003677">
    <property type="term" value="F:DNA binding"/>
    <property type="evidence" value="ECO:0000250"/>
    <property type="project" value="TAIR"/>
</dbReference>
<dbReference type="GO" id="GO:0042803">
    <property type="term" value="F:protein homodimerization activity"/>
    <property type="evidence" value="ECO:0000314"/>
    <property type="project" value="UniProtKB"/>
</dbReference>
<dbReference type="GO" id="GO:0000976">
    <property type="term" value="F:transcription cis-regulatory region binding"/>
    <property type="evidence" value="ECO:0000353"/>
    <property type="project" value="TAIR"/>
</dbReference>
<dbReference type="GO" id="GO:0008270">
    <property type="term" value="F:zinc ion binding"/>
    <property type="evidence" value="ECO:0007669"/>
    <property type="project" value="UniProtKB-KW"/>
</dbReference>
<dbReference type="GO" id="GO:0001173">
    <property type="term" value="P:DNA-templated transcriptional start site selection"/>
    <property type="evidence" value="ECO:0000270"/>
    <property type="project" value="TAIR"/>
</dbReference>
<dbReference type="GO" id="GO:0009740">
    <property type="term" value="P:gibberellic acid mediated signaling pathway"/>
    <property type="evidence" value="ECO:0007669"/>
    <property type="project" value="UniProtKB-KW"/>
</dbReference>
<dbReference type="GO" id="GO:0045893">
    <property type="term" value="P:positive regulation of DNA-templated transcription"/>
    <property type="evidence" value="ECO:0000270"/>
    <property type="project" value="TAIR"/>
</dbReference>
<dbReference type="GO" id="GO:0009637">
    <property type="term" value="P:response to blue light"/>
    <property type="evidence" value="ECO:0000314"/>
    <property type="project" value="TAIR"/>
</dbReference>
<dbReference type="GO" id="GO:0009739">
    <property type="term" value="P:response to gibberellin"/>
    <property type="evidence" value="ECO:0000270"/>
    <property type="project" value="UniProtKB"/>
</dbReference>
<dbReference type="FunFam" id="1.10.10.60:FF:000257">
    <property type="entry name" value="Zinc-finger homeodomain protein 2"/>
    <property type="match status" value="1"/>
</dbReference>
<dbReference type="Gene3D" id="1.10.10.60">
    <property type="entry name" value="Homeodomain-like"/>
    <property type="match status" value="1"/>
</dbReference>
<dbReference type="InterPro" id="IPR009057">
    <property type="entry name" value="Homeodomain-like_sf"/>
</dbReference>
<dbReference type="InterPro" id="IPR006455">
    <property type="entry name" value="Homeodomain_ZF_HD"/>
</dbReference>
<dbReference type="InterPro" id="IPR006456">
    <property type="entry name" value="ZF_HD_homeobox_Cys/His_dimer"/>
</dbReference>
<dbReference type="NCBIfam" id="TIGR01565">
    <property type="entry name" value="homeo_ZF_HD"/>
    <property type="match status" value="1"/>
</dbReference>
<dbReference type="NCBIfam" id="TIGR01566">
    <property type="entry name" value="ZF_HD_prot_N"/>
    <property type="match status" value="1"/>
</dbReference>
<dbReference type="PANTHER" id="PTHR31948:SF72">
    <property type="entry name" value="ZINC-FINGER HOMEODOMAIN PROTEIN 10"/>
    <property type="match status" value="1"/>
</dbReference>
<dbReference type="PANTHER" id="PTHR31948">
    <property type="entry name" value="ZINC-FINGER HOMEODOMAIN PROTEIN 2"/>
    <property type="match status" value="1"/>
</dbReference>
<dbReference type="Pfam" id="PF04770">
    <property type="entry name" value="ZF-HD_dimer"/>
    <property type="match status" value="1"/>
</dbReference>
<dbReference type="SUPFAM" id="SSF46689">
    <property type="entry name" value="Homeodomain-like"/>
    <property type="match status" value="1"/>
</dbReference>
<dbReference type="PROSITE" id="PS51523">
    <property type="entry name" value="ZF_HD_DIMER"/>
    <property type="match status" value="1"/>
</dbReference>
<reference key="1">
    <citation type="journal article" date="1998" name="DNA Res.">
        <title>Structural analysis of Arabidopsis thaliana chromosome 5. VII. Sequence features of the regions of 1,013,767 bp covered by sixteen physically assigned P1 and TAC clones.</title>
        <authorList>
            <person name="Nakamura Y."/>
            <person name="Sato S."/>
            <person name="Asamizu E."/>
            <person name="Kaneko T."/>
            <person name="Kotani H."/>
            <person name="Miyajima N."/>
            <person name="Tabata S."/>
        </authorList>
    </citation>
    <scope>NUCLEOTIDE SEQUENCE [LARGE SCALE GENOMIC DNA]</scope>
    <source>
        <strain>cv. Columbia</strain>
    </source>
</reference>
<reference key="2">
    <citation type="journal article" date="2017" name="Plant J.">
        <title>Araport11: a complete reannotation of the Arabidopsis thaliana reference genome.</title>
        <authorList>
            <person name="Cheng C.Y."/>
            <person name="Krishnakumar V."/>
            <person name="Chan A.P."/>
            <person name="Thibaud-Nissen F."/>
            <person name="Schobel S."/>
            <person name="Town C.D."/>
        </authorList>
    </citation>
    <scope>GENOME REANNOTATION</scope>
    <source>
        <strain>cv. Columbia</strain>
    </source>
</reference>
<reference key="3">
    <citation type="journal article" date="2003" name="Science">
        <title>Empirical analysis of transcriptional activity in the Arabidopsis genome.</title>
        <authorList>
            <person name="Yamada K."/>
            <person name="Lim J."/>
            <person name="Dale J.M."/>
            <person name="Chen H."/>
            <person name="Shinn P."/>
            <person name="Palm C.J."/>
            <person name="Southwick A.M."/>
            <person name="Wu H.C."/>
            <person name="Kim C.J."/>
            <person name="Nguyen M."/>
            <person name="Pham P.K."/>
            <person name="Cheuk R.F."/>
            <person name="Karlin-Newmann G."/>
            <person name="Liu S.X."/>
            <person name="Lam B."/>
            <person name="Sakano H."/>
            <person name="Wu T."/>
            <person name="Yu G."/>
            <person name="Miranda M."/>
            <person name="Quach H.L."/>
            <person name="Tripp M."/>
            <person name="Chang C.H."/>
            <person name="Lee J.M."/>
            <person name="Toriumi M.J."/>
            <person name="Chan M.M."/>
            <person name="Tang C.C."/>
            <person name="Onodera C.S."/>
            <person name="Deng J.M."/>
            <person name="Akiyama K."/>
            <person name="Ansari Y."/>
            <person name="Arakawa T."/>
            <person name="Banh J."/>
            <person name="Banno F."/>
            <person name="Bowser L."/>
            <person name="Brooks S.Y."/>
            <person name="Carninci P."/>
            <person name="Chao Q."/>
            <person name="Choy N."/>
            <person name="Enju A."/>
            <person name="Goldsmith A.D."/>
            <person name="Gurjal M."/>
            <person name="Hansen N.F."/>
            <person name="Hayashizaki Y."/>
            <person name="Johnson-Hopson C."/>
            <person name="Hsuan V.W."/>
            <person name="Iida K."/>
            <person name="Karnes M."/>
            <person name="Khan S."/>
            <person name="Koesema E."/>
            <person name="Ishida J."/>
            <person name="Jiang P.X."/>
            <person name="Jones T."/>
            <person name="Kawai J."/>
            <person name="Kamiya A."/>
            <person name="Meyers C."/>
            <person name="Nakajima M."/>
            <person name="Narusaka M."/>
            <person name="Seki M."/>
            <person name="Sakurai T."/>
            <person name="Satou M."/>
            <person name="Tamse R."/>
            <person name="Vaysberg M."/>
            <person name="Wallender E.K."/>
            <person name="Wong C."/>
            <person name="Yamamura Y."/>
            <person name="Yuan S."/>
            <person name="Shinozaki K."/>
            <person name="Davis R.W."/>
            <person name="Theologis A."/>
            <person name="Ecker J.R."/>
        </authorList>
    </citation>
    <scope>NUCLEOTIDE SEQUENCE [LARGE SCALE MRNA]</scope>
    <source>
        <strain>cv. Columbia</strain>
    </source>
</reference>
<reference key="4">
    <citation type="submission" date="2006-07" db="EMBL/GenBank/DDBJ databases">
        <title>Large-scale analysis of RIKEN Arabidopsis full-length (RAFL) cDNAs.</title>
        <authorList>
            <person name="Totoki Y."/>
            <person name="Seki M."/>
            <person name="Ishida J."/>
            <person name="Nakajima M."/>
            <person name="Enju A."/>
            <person name="Kamiya A."/>
            <person name="Narusaka M."/>
            <person name="Shin-i T."/>
            <person name="Nakagawa M."/>
            <person name="Sakamoto N."/>
            <person name="Oishi K."/>
            <person name="Kohara Y."/>
            <person name="Kobayashi M."/>
            <person name="Toyoda A."/>
            <person name="Sakaki Y."/>
            <person name="Sakurai T."/>
            <person name="Iida K."/>
            <person name="Akiyama K."/>
            <person name="Satou M."/>
            <person name="Toyoda T."/>
            <person name="Konagaya A."/>
            <person name="Carninci P."/>
            <person name="Kawai J."/>
            <person name="Hayashizaki Y."/>
            <person name="Shinozaki K."/>
        </authorList>
    </citation>
    <scope>NUCLEOTIDE SEQUENCE [LARGE SCALE MRNA]</scope>
    <source>
        <strain>cv. Columbia</strain>
    </source>
</reference>
<reference key="5">
    <citation type="submission" date="2002-03" db="EMBL/GenBank/DDBJ databases">
        <title>Full-length cDNA from Arabidopsis thaliana.</title>
        <authorList>
            <person name="Brover V.V."/>
            <person name="Troukhan M.E."/>
            <person name="Alexandrov N.A."/>
            <person name="Lu Y.-P."/>
            <person name="Flavell R.B."/>
            <person name="Feldmann K.A."/>
        </authorList>
    </citation>
    <scope>NUCLEOTIDE SEQUENCE [LARGE SCALE MRNA]</scope>
</reference>
<reference key="6">
    <citation type="journal article" date="2001" name="Plant Mol. Biol.">
        <title>Characterization of a novel class of plant homeodomain proteins that bind to the C4 phosphoenolpyruvate carboxylase gene of Flaveria trinervia.</title>
        <authorList>
            <person name="Windhoevel A."/>
            <person name="Hein I."/>
            <person name="Dabrowa R."/>
            <person name="Stockhaus J."/>
        </authorList>
    </citation>
    <scope>IDENTIFICATION</scope>
</reference>
<reference key="7">
    <citation type="journal article" date="2006" name="Plant Physiol.">
        <title>The Arabidopsis zinc finger-homeodomain genes encode proteins with unique biochemical properties that are coordinately expressed during floral development.</title>
        <authorList>
            <person name="Tan Q.K."/>
            <person name="Irish V.F."/>
        </authorList>
    </citation>
    <scope>HOMODIMERIZATION</scope>
    <scope>INTERACTION WITH ZHD1; ZHD2; ZHD4; ZHD5; ZHD6; ZHD7 AND ZHD8</scope>
    <scope>TISSUE SPECIFICITY</scope>
    <scope>GENE FAMILY</scope>
    <scope>NOMENCLATURE</scope>
</reference>
<reference key="8">
    <citation type="journal article" date="2007" name="Plant Cell Rep.">
        <title>ATHB23, an Arabidopsis class I homeodomain-leucine zipper gene, is expressed in the adaxial region of young leaves.</title>
        <authorList>
            <person name="Kim Y.-K."/>
            <person name="Son O."/>
            <person name="Kim M.-R."/>
            <person name="Nam K.-H."/>
            <person name="Kim G.-T."/>
            <person name="Lee M.-S."/>
            <person name="Choi S.-Y."/>
            <person name="Cheon C.-I."/>
        </authorList>
    </citation>
    <scope>FUNCTION</scope>
    <scope>INDUCTION BY GIBBERELLIC ACID</scope>
    <scope>TISSUE SPECIFICITY</scope>
    <scope>DEVELOPMENTAL STAGE</scope>
    <source>
        <strain>cv. Columbia</strain>
    </source>
</reference>
<reference key="9">
    <citation type="journal article" date="2008" name="J. Integr. Plant Biol.">
        <title>Phylogenetic analysis of the plant-specific zinc finger-homeobox and mini zinc finger gene families.</title>
        <authorList>
            <person name="Hu W."/>
            <person name="dePamphilis C.W."/>
            <person name="Ma H."/>
        </authorList>
    </citation>
    <scope>GENE FAMILY</scope>
    <scope>NOMENCLATURE</scope>
</reference>
<reference key="10">
    <citation type="journal article" date="2011" name="J. Biol. Chem.">
        <title>Nuclear import and DNA binding of the ZHD5 transcription factor is modulated by a competitive peptide inhibitor in Arabidopsis.</title>
        <authorList>
            <person name="Hong S.-Y."/>
            <person name="Kim O.-K."/>
            <person name="Kim S.-G."/>
            <person name="Yang M.-S."/>
            <person name="Park C.-M."/>
        </authorList>
    </citation>
    <scope>INTERACTION WITH MIF1; MIF2 AND MIF3</scope>
    <scope>GENE FAMILY</scope>
    <scope>NOMENCLATURE</scope>
    <source>
        <strain>cv. Columbia</strain>
    </source>
</reference>
<reference key="11">
    <citation type="journal article" date="2016" name="Curr. Plant Biol.">
        <title>A protein-protein interaction network linking the energy-sensor kinase SnRK1 to multiple signaling pathways in Arabidopsis thaliana.</title>
        <authorList>
            <person name="Nietzsche M."/>
            <person name="Landgraf R."/>
            <person name="Tohge T."/>
            <person name="Boernke F."/>
        </authorList>
    </citation>
    <scope>INTERACTION WITH KIN10 AND KIN11</scope>
</reference>
<protein>
    <recommendedName>
        <fullName>Zinc-finger homeodomain protein 10</fullName>
        <shortName>AtZHD10</shortName>
    </recommendedName>
    <alternativeName>
        <fullName>Homeobox protein 23</fullName>
        <shortName>AtHB-23</shortName>
    </alternativeName>
</protein>
<name>ZHD10_ARATH</name>
<organism>
    <name type="scientific">Arabidopsis thaliana</name>
    <name type="common">Mouse-ear cress</name>
    <dbReference type="NCBI Taxonomy" id="3702"/>
    <lineage>
        <taxon>Eukaryota</taxon>
        <taxon>Viridiplantae</taxon>
        <taxon>Streptophyta</taxon>
        <taxon>Embryophyta</taxon>
        <taxon>Tracheophyta</taxon>
        <taxon>Spermatophyta</taxon>
        <taxon>Magnoliopsida</taxon>
        <taxon>eudicotyledons</taxon>
        <taxon>Gunneridae</taxon>
        <taxon>Pentapetalae</taxon>
        <taxon>rosids</taxon>
        <taxon>malvids</taxon>
        <taxon>Brassicales</taxon>
        <taxon>Brassicaceae</taxon>
        <taxon>Camelineae</taxon>
        <taxon>Arabidopsis</taxon>
    </lineage>
</organism>
<gene>
    <name type="primary">ZHD10</name>
    <name type="synonym">HB23</name>
    <name type="ordered locus">At5g39760</name>
    <name type="ORF">MKM21.8</name>
</gene>
<evidence type="ECO:0000250" key="1"/>
<evidence type="ECO:0000255" key="2">
    <source>
        <dbReference type="PROSITE-ProRule" id="PRU00856"/>
    </source>
</evidence>
<evidence type="ECO:0000256" key="3">
    <source>
        <dbReference type="SAM" id="MobiDB-lite"/>
    </source>
</evidence>
<evidence type="ECO:0000269" key="4">
    <source>
    </source>
</evidence>
<evidence type="ECO:0000269" key="5">
    <source>
    </source>
</evidence>
<evidence type="ECO:0000269" key="6">
    <source>
    </source>
</evidence>
<evidence type="ECO:0000269" key="7">
    <source ref="11"/>
</evidence>
<evidence type="ECO:0000305" key="8"/>
<accession>Q9FIW9</accession>
<accession>Q0WUG8</accession>
<accession>Q8LCV0</accession>
<comment type="function">
    <text evidence="5">Putative transcription factor. Probably involved in establishing polarity during leaf development through the gibberellic acid (GA) signaling pathway.</text>
</comment>
<comment type="subunit">
    <text evidence="4 6 7">Homo- and heterodimer with other ZFHD proteins. Interacts with MIF1, MIF2 and MIF3; these interactions prevent nuclear localization and DNA-binding to inhibit transcription regulation activity. Binds to ZHD1, ZHD2, ZHD4, ZHD5, ZHD6, ZHD7 and ZHD8. Interacts with KIN10 and KIN11 (Ref.11).</text>
</comment>
<comment type="interaction">
    <interactant intactId="EBI-1806298">
        <id>Q9FIW9</id>
    </interactant>
    <interactant intactId="EBI-15199129">
        <id>Q8GWP4</id>
        <label>At2g21530</label>
    </interactant>
    <organismsDiffer>false</organismsDiffer>
    <experiments>3</experiments>
</comment>
<comment type="interaction">
    <interactant intactId="EBI-1806298">
        <id>Q9FIW9</id>
    </interactant>
    <interactant intactId="EBI-15192535">
        <id>F4JI72</id>
        <label>At4g03250</label>
    </interactant>
    <organismsDiffer>false</organismsDiffer>
    <experiments>3</experiments>
</comment>
<comment type="interaction">
    <interactant intactId="EBI-1806298">
        <id>Q9FIW9</id>
    </interactant>
    <interactant intactId="EBI-766685">
        <id>Q9FKP8</id>
        <label>ZHD1</label>
    </interactant>
    <organismsDiffer>false</organismsDiffer>
    <experiments>3</experiments>
</comment>
<comment type="interaction">
    <interactant intactId="EBI-1806298">
        <id>Q9FIW9</id>
    </interactant>
    <interactant intactId="EBI-1806559">
        <id>Q9FMY7</id>
        <label>ZHD13</label>
    </interactant>
    <organismsDiffer>false</organismsDiffer>
    <experiments>4</experiments>
</comment>
<comment type="interaction">
    <interactant intactId="EBI-1806298">
        <id>Q9FIW9</id>
    </interactant>
    <interactant intactId="EBI-1806701">
        <id>Q9LQW3</id>
        <label>ZHD14</label>
    </interactant>
    <organismsDiffer>false</organismsDiffer>
    <experiments>3</experiments>
</comment>
<comment type="interaction">
    <interactant intactId="EBI-1806298">
        <id>Q9FIW9</id>
    </interactant>
    <interactant intactId="EBI-1806244">
        <id>O64722</id>
        <label>ZHD3</label>
    </interactant>
    <organismsDiffer>false</organismsDiffer>
    <experiments>4</experiments>
</comment>
<comment type="interaction">
    <interactant intactId="EBI-1806298">
        <id>Q9FIW9</id>
    </interactant>
    <interactant intactId="EBI-1806420">
        <id>Q9M9S0</id>
        <label>ZHD4</label>
    </interactant>
    <organismsDiffer>false</organismsDiffer>
    <experiments>4</experiments>
</comment>
<comment type="interaction">
    <interactant intactId="EBI-1806298">
        <id>Q9FIW9</id>
    </interactant>
    <interactant intactId="EBI-1806169">
        <id>Q9FRL5</id>
        <label>ZHD5</label>
    </interactant>
    <organismsDiffer>false</organismsDiffer>
    <experiments>4</experiments>
</comment>
<comment type="interaction">
    <interactant intactId="EBI-1806298">
        <id>Q9FIW9</id>
    </interactant>
    <interactant intactId="EBI-1806363">
        <id>Q9ZPW7</id>
        <label>ZHD6</label>
    </interactant>
    <organismsDiffer>false</organismsDiffer>
    <experiments>5</experiments>
</comment>
<comment type="interaction">
    <interactant intactId="EBI-1806298">
        <id>Q9FIW9</id>
    </interactant>
    <interactant intactId="EBI-1806382">
        <id>Q9SVL0</id>
        <label>ZHD7</label>
    </interactant>
    <organismsDiffer>false</organismsDiffer>
    <experiments>5</experiments>
</comment>
<comment type="interaction">
    <interactant intactId="EBI-1806298">
        <id>Q9FIW9</id>
    </interactant>
    <interactant intactId="EBI-1806405">
        <id>Q9LXG0</id>
        <label>ZHD8</label>
    </interactant>
    <organismsDiffer>false</organismsDiffer>
    <experiments>7</experiments>
</comment>
<comment type="interaction">
    <interactant intactId="EBI-1806298">
        <id>Q9FIW9</id>
    </interactant>
    <interactant intactId="EBI-1806440">
        <id>Q9LHF0</id>
        <label>ZHD9</label>
    </interactant>
    <organismsDiffer>false</organismsDiffer>
    <experiments>4</experiments>
</comment>
<comment type="subcellular location">
    <subcellularLocation>
        <location evidence="1">Nucleus</location>
    </subcellularLocation>
    <text evidence="1">Interactions with MIF proteins prevent nuclear subcellular location and leads to a scattered repartition throughout the cytoplasm.</text>
</comment>
<comment type="tissue specificity">
    <text evidence="4 5">Mostly expressed in rosettes (e.g. young leaves), flowers (e.g. styles), siliques and inflorescence.</text>
</comment>
<comment type="developmental stage">
    <text evidence="5">In young leaves, accumulates in the adaxial domain of leaf primordia and the rib meristem.</text>
</comment>
<comment type="induction">
    <text evidence="5">By gibberellic acid (GA).</text>
</comment>
<comment type="domain">
    <text>The homeodomain differs form the typical one by having namely 4 instead of 3 extra amino acids inserted in the loop between helix 1 and helix 2.</text>
</comment>
<comment type="sequence caution" evidence="8">
    <conflict type="erroneous initiation">
        <sequence resource="EMBL-CDS" id="AAM64462"/>
    </conflict>
    <text>Truncated N-terminus.</text>
</comment>
<keyword id="KW-0238">DNA-binding</keyword>
<keyword id="KW-0939">Gibberellin signaling pathway</keyword>
<keyword id="KW-0371">Homeobox</keyword>
<keyword id="KW-0479">Metal-binding</keyword>
<keyword id="KW-0539">Nucleus</keyword>
<keyword id="KW-1185">Reference proteome</keyword>
<keyword id="KW-0804">Transcription</keyword>
<keyword id="KW-0805">Transcription regulation</keyword>
<keyword id="KW-0862">Zinc</keyword>
<keyword id="KW-0863">Zinc-finger</keyword>
<proteinExistence type="evidence at protein level"/>
<feature type="chain" id="PRO_0000426024" description="Zinc-finger homeodomain protein 10">
    <location>
        <begin position="1"/>
        <end position="334"/>
    </location>
</feature>
<feature type="zinc finger region" description="ZF-HD dimerization-type; degenerate" evidence="2">
    <location>
        <begin position="56"/>
        <end position="107"/>
    </location>
</feature>
<feature type="DNA-binding region" description="Homeobox">
    <location>
        <begin position="200"/>
        <end position="263"/>
    </location>
</feature>
<feature type="region of interest" description="Disordered" evidence="3">
    <location>
        <begin position="1"/>
        <end position="33"/>
    </location>
</feature>
<feature type="region of interest" description="Disordered" evidence="3">
    <location>
        <begin position="103"/>
        <end position="164"/>
    </location>
</feature>
<feature type="region of interest" description="Disordered" evidence="3">
    <location>
        <begin position="292"/>
        <end position="334"/>
    </location>
</feature>
<feature type="compositionally biased region" description="Low complexity" evidence="3">
    <location>
        <begin position="1"/>
        <end position="15"/>
    </location>
</feature>
<feature type="compositionally biased region" description="Pro residues" evidence="3">
    <location>
        <begin position="136"/>
        <end position="155"/>
    </location>
</feature>
<feature type="compositionally biased region" description="Gly residues" evidence="3">
    <location>
        <begin position="309"/>
        <end position="328"/>
    </location>
</feature>
<feature type="site" description="Required for DNA-binding" evidence="1">
    <location>
        <position position="252"/>
    </location>
</feature>
<feature type="sequence conflict" description="In Ref. 4; BAE99230." evidence="8" ref="4">
    <original>R</original>
    <variation>L</variation>
    <location>
        <position position="106"/>
    </location>
</feature>
<feature type="sequence conflict" description="In Ref. 5; AAM64462." evidence="8" ref="5">
    <original>Y</original>
    <variation>N</variation>
    <location>
        <position position="127"/>
    </location>
</feature>
<feature type="sequence conflict" description="In Ref. 5; AAM64462." evidence="8" ref="5">
    <original>E</original>
    <variation>Z</variation>
    <location>
        <position position="231"/>
    </location>
</feature>
<sequence length="334" mass="36386">MMDMTPTITTTTTPTPKSPEPESETPTRIQPAKPISFSNGIIKRHHHHHHPLLFTYKECLKNHAAALGGHALDGCGEFMPSPSSISSDPTSLKCAACGCHRNFHRRDPDNNNDSSQIPPPPSTAVEYQPHHRHHPPPPPPPPPPRSPNSASPPPISSSYMLLSLSGTNNNNNNLASFSDLNFSAGNNHHHHHQHTLHGSRKRFRTKFSQFQKEKMHEFAERVGWKMQKRDEDDVRDFCRQIGVDKSVLKVWMHNNKNTFNRRDIAGNEIRQIDNGGGNHTPILAGEINNHNNGHHGVGGGGELHQSVSSGGGGGGFDSDSGGANGGNVNGSSSS</sequence>